<proteinExistence type="inferred from homology"/>
<protein>
    <recommendedName>
        <fullName evidence="1">Large ribosomal subunit protein uL5</fullName>
    </recommendedName>
    <alternativeName>
        <fullName evidence="2">50S ribosomal protein L5</fullName>
    </alternativeName>
</protein>
<gene>
    <name evidence="1" type="primary">rplE</name>
    <name type="ordered locus">ckrop_1809</name>
</gene>
<organism>
    <name type="scientific">Corynebacterium kroppenstedtii (strain DSM 44385 / JCM 11950 / CIP 105744 / CCUG 35717)</name>
    <dbReference type="NCBI Taxonomy" id="645127"/>
    <lineage>
        <taxon>Bacteria</taxon>
        <taxon>Bacillati</taxon>
        <taxon>Actinomycetota</taxon>
        <taxon>Actinomycetes</taxon>
        <taxon>Mycobacteriales</taxon>
        <taxon>Corynebacteriaceae</taxon>
        <taxon>Corynebacterium</taxon>
    </lineage>
</organism>
<keyword id="KW-1185">Reference proteome</keyword>
<keyword id="KW-0687">Ribonucleoprotein</keyword>
<keyword id="KW-0689">Ribosomal protein</keyword>
<keyword id="KW-0694">RNA-binding</keyword>
<keyword id="KW-0699">rRNA-binding</keyword>
<keyword id="KW-0820">tRNA-binding</keyword>
<dbReference type="EMBL" id="CP001620">
    <property type="protein sequence ID" value="ACR18529.1"/>
    <property type="molecule type" value="Genomic_DNA"/>
</dbReference>
<dbReference type="RefSeq" id="WP_012732416.1">
    <property type="nucleotide sequence ID" value="NC_012704.1"/>
</dbReference>
<dbReference type="SMR" id="C4LL24"/>
<dbReference type="STRING" id="645127.ckrop_1809"/>
<dbReference type="KEGG" id="ckp:ckrop_1809"/>
<dbReference type="eggNOG" id="COG0094">
    <property type="taxonomic scope" value="Bacteria"/>
</dbReference>
<dbReference type="HOGENOM" id="CLU_061015_2_1_11"/>
<dbReference type="OrthoDB" id="9806626at2"/>
<dbReference type="Proteomes" id="UP000001473">
    <property type="component" value="Chromosome"/>
</dbReference>
<dbReference type="GO" id="GO:1990904">
    <property type="term" value="C:ribonucleoprotein complex"/>
    <property type="evidence" value="ECO:0007669"/>
    <property type="project" value="UniProtKB-KW"/>
</dbReference>
<dbReference type="GO" id="GO:0005840">
    <property type="term" value="C:ribosome"/>
    <property type="evidence" value="ECO:0007669"/>
    <property type="project" value="UniProtKB-KW"/>
</dbReference>
<dbReference type="GO" id="GO:0019843">
    <property type="term" value="F:rRNA binding"/>
    <property type="evidence" value="ECO:0007669"/>
    <property type="project" value="UniProtKB-UniRule"/>
</dbReference>
<dbReference type="GO" id="GO:0003735">
    <property type="term" value="F:structural constituent of ribosome"/>
    <property type="evidence" value="ECO:0007669"/>
    <property type="project" value="InterPro"/>
</dbReference>
<dbReference type="GO" id="GO:0000049">
    <property type="term" value="F:tRNA binding"/>
    <property type="evidence" value="ECO:0007669"/>
    <property type="project" value="UniProtKB-UniRule"/>
</dbReference>
<dbReference type="GO" id="GO:0006412">
    <property type="term" value="P:translation"/>
    <property type="evidence" value="ECO:0007669"/>
    <property type="project" value="UniProtKB-UniRule"/>
</dbReference>
<dbReference type="FunFam" id="3.30.1440.10:FF:000001">
    <property type="entry name" value="50S ribosomal protein L5"/>
    <property type="match status" value="1"/>
</dbReference>
<dbReference type="Gene3D" id="3.30.1440.10">
    <property type="match status" value="1"/>
</dbReference>
<dbReference type="HAMAP" id="MF_01333_B">
    <property type="entry name" value="Ribosomal_uL5_B"/>
    <property type="match status" value="1"/>
</dbReference>
<dbReference type="InterPro" id="IPR002132">
    <property type="entry name" value="Ribosomal_uL5"/>
</dbReference>
<dbReference type="InterPro" id="IPR020930">
    <property type="entry name" value="Ribosomal_uL5_bac-type"/>
</dbReference>
<dbReference type="InterPro" id="IPR031309">
    <property type="entry name" value="Ribosomal_uL5_C"/>
</dbReference>
<dbReference type="InterPro" id="IPR022803">
    <property type="entry name" value="Ribosomal_uL5_dom_sf"/>
</dbReference>
<dbReference type="InterPro" id="IPR031310">
    <property type="entry name" value="Ribosomal_uL5_N"/>
</dbReference>
<dbReference type="NCBIfam" id="NF000585">
    <property type="entry name" value="PRK00010.1"/>
    <property type="match status" value="1"/>
</dbReference>
<dbReference type="PANTHER" id="PTHR11994">
    <property type="entry name" value="60S RIBOSOMAL PROTEIN L11-RELATED"/>
    <property type="match status" value="1"/>
</dbReference>
<dbReference type="Pfam" id="PF00281">
    <property type="entry name" value="Ribosomal_L5"/>
    <property type="match status" value="1"/>
</dbReference>
<dbReference type="Pfam" id="PF00673">
    <property type="entry name" value="Ribosomal_L5_C"/>
    <property type="match status" value="1"/>
</dbReference>
<dbReference type="PIRSF" id="PIRSF002161">
    <property type="entry name" value="Ribosomal_L5"/>
    <property type="match status" value="1"/>
</dbReference>
<dbReference type="SUPFAM" id="SSF55282">
    <property type="entry name" value="RL5-like"/>
    <property type="match status" value="1"/>
</dbReference>
<name>RL5_CORK4</name>
<comment type="function">
    <text evidence="1">This is one of the proteins that bind and probably mediate the attachment of the 5S RNA into the large ribosomal subunit, where it forms part of the central protuberance. In the 70S ribosome it contacts protein S13 of the 30S subunit (bridge B1b), connecting the 2 subunits; this bridge is implicated in subunit movement. Contacts the P site tRNA; the 5S rRNA and some of its associated proteins might help stabilize positioning of ribosome-bound tRNAs.</text>
</comment>
<comment type="subunit">
    <text evidence="1">Part of the 50S ribosomal subunit; part of the 5S rRNA/L5/L18/L25 subcomplex. Contacts the 5S rRNA and the P site tRNA. Forms a bridge to the 30S subunit in the 70S ribosome.</text>
</comment>
<comment type="similarity">
    <text evidence="1">Belongs to the universal ribosomal protein uL5 family.</text>
</comment>
<accession>C4LL24</accession>
<reference key="1">
    <citation type="journal article" date="2008" name="J. Biotechnol.">
        <title>Ultrafast pyrosequencing of Corynebacterium kroppenstedtii DSM44385 revealed insights into the physiology of a lipophilic corynebacterium that lacks mycolic acids.</title>
        <authorList>
            <person name="Tauch A."/>
            <person name="Schneider J."/>
            <person name="Szczepanowski R."/>
            <person name="Tilker A."/>
            <person name="Viehoever P."/>
            <person name="Gartemann K.-H."/>
            <person name="Arnold W."/>
            <person name="Blom J."/>
            <person name="Brinkrolf K."/>
            <person name="Brune I."/>
            <person name="Goetker S."/>
            <person name="Weisshaar B."/>
            <person name="Goesmann A."/>
            <person name="Droege M."/>
            <person name="Puehler A."/>
        </authorList>
    </citation>
    <scope>NUCLEOTIDE SEQUENCE [LARGE SCALE GENOMIC DNA]</scope>
    <source>
        <strain>DSM 44385 / JCM 11950 / CIP 105744 / CCUG 35717</strain>
    </source>
</reference>
<feature type="chain" id="PRO_1000214622" description="Large ribosomal subunit protein uL5">
    <location>
        <begin position="1"/>
        <end position="184"/>
    </location>
</feature>
<evidence type="ECO:0000255" key="1">
    <source>
        <dbReference type="HAMAP-Rule" id="MF_01333"/>
    </source>
</evidence>
<evidence type="ECO:0000305" key="2"/>
<sequence length="184" mass="21016">MSENYTPRLKTRYRSEIRETLNKEFEYANVMQIPGVTKVVVNMGVGDAARDSKLINGALNDLTLITGQKPQIRRAKKAIANFKLREGMPIGARVTLRGDRMWEFLDRLLTVALPRIRDFRGLSDKQFDGHGNYTFGLSEQSMFYELDVDKIDRPRGMNITVVTSATNNEEGRALLRELGFPFKK</sequence>